<dbReference type="EC" id="2.7.7.60" evidence="1"/>
<dbReference type="EMBL" id="CR378673">
    <property type="protein sequence ID" value="CAG21393.1"/>
    <property type="molecule type" value="Genomic_DNA"/>
</dbReference>
<dbReference type="RefSeq" id="WP_011219652.1">
    <property type="nucleotide sequence ID" value="NC_006370.1"/>
</dbReference>
<dbReference type="SMR" id="Q6LMT3"/>
<dbReference type="STRING" id="298386.PBPRA3077"/>
<dbReference type="KEGG" id="ppr:PBPRA3077"/>
<dbReference type="eggNOG" id="COG1211">
    <property type="taxonomic scope" value="Bacteria"/>
</dbReference>
<dbReference type="HOGENOM" id="CLU_061281_3_1_6"/>
<dbReference type="UniPathway" id="UPA00056">
    <property type="reaction ID" value="UER00093"/>
</dbReference>
<dbReference type="Proteomes" id="UP000000593">
    <property type="component" value="Chromosome 1"/>
</dbReference>
<dbReference type="GO" id="GO:0050518">
    <property type="term" value="F:2-C-methyl-D-erythritol 4-phosphate cytidylyltransferase activity"/>
    <property type="evidence" value="ECO:0007669"/>
    <property type="project" value="UniProtKB-UniRule"/>
</dbReference>
<dbReference type="GO" id="GO:0019288">
    <property type="term" value="P:isopentenyl diphosphate biosynthetic process, methylerythritol 4-phosphate pathway"/>
    <property type="evidence" value="ECO:0007669"/>
    <property type="project" value="UniProtKB-UniRule"/>
</dbReference>
<dbReference type="CDD" id="cd02516">
    <property type="entry name" value="CDP-ME_synthetase"/>
    <property type="match status" value="1"/>
</dbReference>
<dbReference type="FunFam" id="3.90.550.10:FF:000003">
    <property type="entry name" value="2-C-methyl-D-erythritol 4-phosphate cytidylyltransferase"/>
    <property type="match status" value="1"/>
</dbReference>
<dbReference type="Gene3D" id="3.90.550.10">
    <property type="entry name" value="Spore Coat Polysaccharide Biosynthesis Protein SpsA, Chain A"/>
    <property type="match status" value="1"/>
</dbReference>
<dbReference type="HAMAP" id="MF_00108">
    <property type="entry name" value="IspD"/>
    <property type="match status" value="1"/>
</dbReference>
<dbReference type="InterPro" id="IPR001228">
    <property type="entry name" value="IspD"/>
</dbReference>
<dbReference type="InterPro" id="IPR034683">
    <property type="entry name" value="IspD/TarI"/>
</dbReference>
<dbReference type="InterPro" id="IPR050088">
    <property type="entry name" value="IspD/TarI_cytidylyltransf_bact"/>
</dbReference>
<dbReference type="InterPro" id="IPR018294">
    <property type="entry name" value="ISPD_synthase_CS"/>
</dbReference>
<dbReference type="InterPro" id="IPR029044">
    <property type="entry name" value="Nucleotide-diphossugar_trans"/>
</dbReference>
<dbReference type="NCBIfam" id="TIGR00453">
    <property type="entry name" value="ispD"/>
    <property type="match status" value="1"/>
</dbReference>
<dbReference type="PANTHER" id="PTHR32125">
    <property type="entry name" value="2-C-METHYL-D-ERYTHRITOL 4-PHOSPHATE CYTIDYLYLTRANSFERASE, CHLOROPLASTIC"/>
    <property type="match status" value="1"/>
</dbReference>
<dbReference type="PANTHER" id="PTHR32125:SF4">
    <property type="entry name" value="2-C-METHYL-D-ERYTHRITOL 4-PHOSPHATE CYTIDYLYLTRANSFERASE, CHLOROPLASTIC"/>
    <property type="match status" value="1"/>
</dbReference>
<dbReference type="Pfam" id="PF01128">
    <property type="entry name" value="IspD"/>
    <property type="match status" value="1"/>
</dbReference>
<dbReference type="SUPFAM" id="SSF53448">
    <property type="entry name" value="Nucleotide-diphospho-sugar transferases"/>
    <property type="match status" value="1"/>
</dbReference>
<dbReference type="PROSITE" id="PS01295">
    <property type="entry name" value="ISPD"/>
    <property type="match status" value="1"/>
</dbReference>
<accession>Q6LMT3</accession>
<evidence type="ECO:0000255" key="1">
    <source>
        <dbReference type="HAMAP-Rule" id="MF_00108"/>
    </source>
</evidence>
<feature type="chain" id="PRO_0000075599" description="2-C-methyl-D-erythritol 4-phosphate cytidylyltransferase">
    <location>
        <begin position="1"/>
        <end position="234"/>
    </location>
</feature>
<feature type="site" description="Transition state stabilizer" evidence="1">
    <location>
        <position position="17"/>
    </location>
</feature>
<feature type="site" description="Transition state stabilizer" evidence="1">
    <location>
        <position position="24"/>
    </location>
</feature>
<feature type="site" description="Positions MEP for the nucleophilic attack" evidence="1">
    <location>
        <position position="158"/>
    </location>
</feature>
<feature type="site" description="Positions MEP for the nucleophilic attack" evidence="1">
    <location>
        <position position="214"/>
    </location>
</feature>
<comment type="function">
    <text evidence="1">Catalyzes the formation of 4-diphosphocytidyl-2-C-methyl-D-erythritol from CTP and 2-C-methyl-D-erythritol 4-phosphate (MEP).</text>
</comment>
<comment type="catalytic activity">
    <reaction evidence="1">
        <text>2-C-methyl-D-erythritol 4-phosphate + CTP + H(+) = 4-CDP-2-C-methyl-D-erythritol + diphosphate</text>
        <dbReference type="Rhea" id="RHEA:13429"/>
        <dbReference type="ChEBI" id="CHEBI:15378"/>
        <dbReference type="ChEBI" id="CHEBI:33019"/>
        <dbReference type="ChEBI" id="CHEBI:37563"/>
        <dbReference type="ChEBI" id="CHEBI:57823"/>
        <dbReference type="ChEBI" id="CHEBI:58262"/>
        <dbReference type="EC" id="2.7.7.60"/>
    </reaction>
</comment>
<comment type="pathway">
    <text evidence="1">Isoprenoid biosynthesis; isopentenyl diphosphate biosynthesis via DXP pathway; isopentenyl diphosphate from 1-deoxy-D-xylulose 5-phosphate: step 2/6.</text>
</comment>
<comment type="similarity">
    <text evidence="1">Belongs to the IspD/TarI cytidylyltransferase family. IspD subfamily.</text>
</comment>
<name>ISPD_PHOPR</name>
<reference key="1">
    <citation type="journal article" date="2005" name="Science">
        <title>Life at depth: Photobacterium profundum genome sequence and expression analysis.</title>
        <authorList>
            <person name="Vezzi A."/>
            <person name="Campanaro S."/>
            <person name="D'Angelo M."/>
            <person name="Simonato F."/>
            <person name="Vitulo N."/>
            <person name="Lauro F.M."/>
            <person name="Cestaro A."/>
            <person name="Malacrida G."/>
            <person name="Simionati B."/>
            <person name="Cannata N."/>
            <person name="Romualdi C."/>
            <person name="Bartlett D.H."/>
            <person name="Valle G."/>
        </authorList>
    </citation>
    <scope>NUCLEOTIDE SEQUENCE [LARGE SCALE GENOMIC DNA]</scope>
    <source>
        <strain>ATCC BAA-1253 / SS9</strain>
    </source>
</reference>
<organism>
    <name type="scientific">Photobacterium profundum (strain SS9)</name>
    <dbReference type="NCBI Taxonomy" id="298386"/>
    <lineage>
        <taxon>Bacteria</taxon>
        <taxon>Pseudomonadati</taxon>
        <taxon>Pseudomonadota</taxon>
        <taxon>Gammaproteobacteria</taxon>
        <taxon>Vibrionales</taxon>
        <taxon>Vibrionaceae</taxon>
        <taxon>Photobacterium</taxon>
    </lineage>
</organism>
<protein>
    <recommendedName>
        <fullName evidence="1">2-C-methyl-D-erythritol 4-phosphate cytidylyltransferase</fullName>
        <ecNumber evidence="1">2.7.7.60</ecNumber>
    </recommendedName>
    <alternativeName>
        <fullName evidence="1">4-diphosphocytidyl-2C-methyl-D-erythritol synthase</fullName>
    </alternativeName>
    <alternativeName>
        <fullName evidence="1">MEP cytidylyltransferase</fullName>
        <shortName evidence="1">MCT</shortName>
    </alternativeName>
</protein>
<proteinExistence type="inferred from homology"/>
<keyword id="KW-0414">Isoprene biosynthesis</keyword>
<keyword id="KW-0548">Nucleotidyltransferase</keyword>
<keyword id="KW-1185">Reference proteome</keyword>
<keyword id="KW-0808">Transferase</keyword>
<gene>
    <name evidence="1" type="primary">ispD</name>
    <name type="ordered locus">PBPRA3077</name>
</gene>
<sequence>MTQQLTAVVPAAGIGSRMAADRPKQYLHIAGKTILEHTIDRLFSHPAITRVIIAISQTDPYFASLPLANDPRITVVDGGAERADSVFAGLAAIDDENTWVLVHDAARPCVRLNDLERLVEAAIRSDSGAILAAPVRDTMKRGCQQINGLQGIVSTVDRNNLWHALTPQMFKVKQLKDSLQHALKEGAVITDEASALEYCGYIPQLVKGRSDNLKVTQPEDLALAGFYLEQLMKE</sequence>